<sequence length="505" mass="55233">MNIKPEEITSIIKSQIEGYESKLETVDSGTIIEIGDGIARIYGLQNCMAGELLEFPNDVYGMALNLEQDNVGCVLLGSEEGIKEGDIVKSTGKVVEVPVGEEMLGRVVNALGQPIDGKGPIKAEDSKPVDIKATGVIDRQSVNQPLQTGIKAIDSMIPIGKGQRELIIGDRQTGKTAIAIDTILNQKGKDVICIYVAIGQKQSTVAHIVNTFEEMGAMDYSIVVAATASDSAPLQYLAPYSGVTIAENFMFKGKDVLIVYDDLSKHAVAYRTMSLLLRRPPGREAYPGDVFYLHSRLLERAAKLSQKLGGGSITALPIIETLAGDVAGYIPTNVISITDGQIFLESELFYAGQRPAVNSGISVSRVGGSAQIKAMKKLSGTLRLELAQYRELAAFAQFGSDLDKESKKRLEKGKRLTEMMKQPQYKPMPVEKQIMILYAVVNEYVMDIDVSKLSAFESGLFEYVDAHYRDLGKQILEKKELTDDISSQLTKAINEYKKIFLAEEQ</sequence>
<dbReference type="EC" id="7.1.2.2" evidence="1"/>
<dbReference type="EMBL" id="AF101055">
    <property type="protein sequence ID" value="AAD16424.1"/>
    <property type="molecule type" value="Genomic_DNA"/>
</dbReference>
<dbReference type="EMBL" id="AE001437">
    <property type="protein sequence ID" value="AAK80810.1"/>
    <property type="molecule type" value="Genomic_DNA"/>
</dbReference>
<dbReference type="PIR" id="G97252">
    <property type="entry name" value="G97252"/>
</dbReference>
<dbReference type="RefSeq" id="NP_349470.1">
    <property type="nucleotide sequence ID" value="NC_003030.1"/>
</dbReference>
<dbReference type="RefSeq" id="WP_010966151.1">
    <property type="nucleotide sequence ID" value="NC_003030.1"/>
</dbReference>
<dbReference type="SMR" id="Q9Z689"/>
<dbReference type="STRING" id="272562.CA_C2867"/>
<dbReference type="GeneID" id="44999355"/>
<dbReference type="KEGG" id="cac:CA_C2867"/>
<dbReference type="PATRIC" id="fig|272562.8.peg.3051"/>
<dbReference type="eggNOG" id="COG0056">
    <property type="taxonomic scope" value="Bacteria"/>
</dbReference>
<dbReference type="HOGENOM" id="CLU_010091_2_1_9"/>
<dbReference type="OrthoDB" id="9803053at2"/>
<dbReference type="Proteomes" id="UP000000814">
    <property type="component" value="Chromosome"/>
</dbReference>
<dbReference type="GO" id="GO:0005886">
    <property type="term" value="C:plasma membrane"/>
    <property type="evidence" value="ECO:0007669"/>
    <property type="project" value="UniProtKB-SubCell"/>
</dbReference>
<dbReference type="GO" id="GO:0045259">
    <property type="term" value="C:proton-transporting ATP synthase complex"/>
    <property type="evidence" value="ECO:0007669"/>
    <property type="project" value="UniProtKB-KW"/>
</dbReference>
<dbReference type="GO" id="GO:0043531">
    <property type="term" value="F:ADP binding"/>
    <property type="evidence" value="ECO:0007669"/>
    <property type="project" value="TreeGrafter"/>
</dbReference>
<dbReference type="GO" id="GO:0005524">
    <property type="term" value="F:ATP binding"/>
    <property type="evidence" value="ECO:0007669"/>
    <property type="project" value="UniProtKB-UniRule"/>
</dbReference>
<dbReference type="GO" id="GO:0046933">
    <property type="term" value="F:proton-transporting ATP synthase activity, rotational mechanism"/>
    <property type="evidence" value="ECO:0007669"/>
    <property type="project" value="UniProtKB-UniRule"/>
</dbReference>
<dbReference type="CDD" id="cd18113">
    <property type="entry name" value="ATP-synt_F1_alpha_C"/>
    <property type="match status" value="1"/>
</dbReference>
<dbReference type="CDD" id="cd18116">
    <property type="entry name" value="ATP-synt_F1_alpha_N"/>
    <property type="match status" value="1"/>
</dbReference>
<dbReference type="CDD" id="cd01132">
    <property type="entry name" value="F1-ATPase_alpha_CD"/>
    <property type="match status" value="1"/>
</dbReference>
<dbReference type="FunFam" id="1.20.150.20:FF:000001">
    <property type="entry name" value="ATP synthase subunit alpha"/>
    <property type="match status" value="1"/>
</dbReference>
<dbReference type="FunFam" id="2.40.30.20:FF:000001">
    <property type="entry name" value="ATP synthase subunit alpha"/>
    <property type="match status" value="1"/>
</dbReference>
<dbReference type="FunFam" id="3.40.50.300:FF:000002">
    <property type="entry name" value="ATP synthase subunit alpha"/>
    <property type="match status" value="1"/>
</dbReference>
<dbReference type="Gene3D" id="2.40.30.20">
    <property type="match status" value="1"/>
</dbReference>
<dbReference type="Gene3D" id="1.20.150.20">
    <property type="entry name" value="ATP synthase alpha/beta chain, C-terminal domain"/>
    <property type="match status" value="1"/>
</dbReference>
<dbReference type="Gene3D" id="3.40.50.300">
    <property type="entry name" value="P-loop containing nucleotide triphosphate hydrolases"/>
    <property type="match status" value="1"/>
</dbReference>
<dbReference type="HAMAP" id="MF_01346">
    <property type="entry name" value="ATP_synth_alpha_bact"/>
    <property type="match status" value="1"/>
</dbReference>
<dbReference type="InterPro" id="IPR023366">
    <property type="entry name" value="ATP_synth_asu-like_sf"/>
</dbReference>
<dbReference type="InterPro" id="IPR000793">
    <property type="entry name" value="ATP_synth_asu_C"/>
</dbReference>
<dbReference type="InterPro" id="IPR038376">
    <property type="entry name" value="ATP_synth_asu_C_sf"/>
</dbReference>
<dbReference type="InterPro" id="IPR033732">
    <property type="entry name" value="ATP_synth_F1_a_nt-bd_dom"/>
</dbReference>
<dbReference type="InterPro" id="IPR005294">
    <property type="entry name" value="ATP_synth_F1_asu"/>
</dbReference>
<dbReference type="InterPro" id="IPR020003">
    <property type="entry name" value="ATPase_a/bsu_AS"/>
</dbReference>
<dbReference type="InterPro" id="IPR004100">
    <property type="entry name" value="ATPase_F1/V1/A1_a/bsu_N"/>
</dbReference>
<dbReference type="InterPro" id="IPR036121">
    <property type="entry name" value="ATPase_F1/V1/A1_a/bsu_N_sf"/>
</dbReference>
<dbReference type="InterPro" id="IPR000194">
    <property type="entry name" value="ATPase_F1/V1/A1_a/bsu_nucl-bd"/>
</dbReference>
<dbReference type="InterPro" id="IPR027417">
    <property type="entry name" value="P-loop_NTPase"/>
</dbReference>
<dbReference type="NCBIfam" id="TIGR00962">
    <property type="entry name" value="atpA"/>
    <property type="match status" value="1"/>
</dbReference>
<dbReference type="NCBIfam" id="NF009884">
    <property type="entry name" value="PRK13343.1"/>
    <property type="match status" value="1"/>
</dbReference>
<dbReference type="PANTHER" id="PTHR48082">
    <property type="entry name" value="ATP SYNTHASE SUBUNIT ALPHA, MITOCHONDRIAL"/>
    <property type="match status" value="1"/>
</dbReference>
<dbReference type="PANTHER" id="PTHR48082:SF2">
    <property type="entry name" value="ATP SYNTHASE SUBUNIT ALPHA, MITOCHONDRIAL"/>
    <property type="match status" value="1"/>
</dbReference>
<dbReference type="Pfam" id="PF00006">
    <property type="entry name" value="ATP-synt_ab"/>
    <property type="match status" value="1"/>
</dbReference>
<dbReference type="Pfam" id="PF00306">
    <property type="entry name" value="ATP-synt_ab_C"/>
    <property type="match status" value="1"/>
</dbReference>
<dbReference type="Pfam" id="PF02874">
    <property type="entry name" value="ATP-synt_ab_N"/>
    <property type="match status" value="1"/>
</dbReference>
<dbReference type="PIRSF" id="PIRSF039088">
    <property type="entry name" value="F_ATPase_subunit_alpha"/>
    <property type="match status" value="1"/>
</dbReference>
<dbReference type="SUPFAM" id="SSF47917">
    <property type="entry name" value="C-terminal domain of alpha and beta subunits of F1 ATP synthase"/>
    <property type="match status" value="1"/>
</dbReference>
<dbReference type="SUPFAM" id="SSF50615">
    <property type="entry name" value="N-terminal domain of alpha and beta subunits of F1 ATP synthase"/>
    <property type="match status" value="1"/>
</dbReference>
<dbReference type="SUPFAM" id="SSF52540">
    <property type="entry name" value="P-loop containing nucleoside triphosphate hydrolases"/>
    <property type="match status" value="1"/>
</dbReference>
<dbReference type="PROSITE" id="PS00152">
    <property type="entry name" value="ATPASE_ALPHA_BETA"/>
    <property type="match status" value="1"/>
</dbReference>
<protein>
    <recommendedName>
        <fullName evidence="1">ATP synthase subunit alpha</fullName>
        <ecNumber evidence="1">7.1.2.2</ecNumber>
    </recommendedName>
    <alternativeName>
        <fullName evidence="1">ATP synthase F1 sector subunit alpha</fullName>
    </alternativeName>
    <alternativeName>
        <fullName evidence="1">F-ATPase subunit alpha</fullName>
    </alternativeName>
</protein>
<accession>Q9Z689</accession>
<name>ATPA_CLOAB</name>
<reference key="1">
    <citation type="journal article" date="2000" name="DNA Seq.">
        <title>Sequence analysis of the atp operon of Clostridium acetobutylicum DSM 792 encoding the F0F1 ATP synthase.</title>
        <authorList>
            <person name="Externbrink T."/>
            <person name="Hujer S."/>
            <person name="Winzer K."/>
            <person name="Duerre P."/>
        </authorList>
    </citation>
    <scope>NUCLEOTIDE SEQUENCE [GENOMIC DNA]</scope>
    <source>
        <strain>ATCC 824 / DSM 792 / JCM 1419 / IAM 19013 / LMG 5710 / NBRC 13948 / NRRL B-527 / VKM B-1787 / 2291 / W</strain>
    </source>
</reference>
<reference key="2">
    <citation type="journal article" date="2001" name="J. Bacteriol.">
        <title>Genome sequence and comparative analysis of the solvent-producing bacterium Clostridium acetobutylicum.</title>
        <authorList>
            <person name="Noelling J."/>
            <person name="Breton G."/>
            <person name="Omelchenko M.V."/>
            <person name="Makarova K.S."/>
            <person name="Zeng Q."/>
            <person name="Gibson R."/>
            <person name="Lee H.M."/>
            <person name="Dubois J."/>
            <person name="Qiu D."/>
            <person name="Hitti J."/>
            <person name="Wolf Y.I."/>
            <person name="Tatusov R.L."/>
            <person name="Sabathe F."/>
            <person name="Doucette-Stamm L.A."/>
            <person name="Soucaille P."/>
            <person name="Daly M.J."/>
            <person name="Bennett G.N."/>
            <person name="Koonin E.V."/>
            <person name="Smith D.R."/>
        </authorList>
    </citation>
    <scope>NUCLEOTIDE SEQUENCE [LARGE SCALE GENOMIC DNA]</scope>
    <source>
        <strain>ATCC 824 / DSM 792 / JCM 1419 / IAM 19013 / LMG 5710 / NBRC 13948 / NRRL B-527 / VKM B-1787 / 2291 / W</strain>
    </source>
</reference>
<feature type="chain" id="PRO_0000144323" description="ATP synthase subunit alpha">
    <location>
        <begin position="1"/>
        <end position="505"/>
    </location>
</feature>
<feature type="binding site" evidence="1">
    <location>
        <begin position="169"/>
        <end position="176"/>
    </location>
    <ligand>
        <name>ATP</name>
        <dbReference type="ChEBI" id="CHEBI:30616"/>
    </ligand>
</feature>
<feature type="site" description="Required for activity">
    <location>
        <position position="362"/>
    </location>
</feature>
<gene>
    <name evidence="1" type="primary">atpA</name>
    <name type="ordered locus">CA_C2867</name>
</gene>
<comment type="function">
    <text evidence="1">Produces ATP from ADP in the presence of a proton gradient across the membrane. The alpha chain is a regulatory subunit.</text>
</comment>
<comment type="catalytic activity">
    <reaction evidence="1">
        <text>ATP + H2O + 4 H(+)(in) = ADP + phosphate + 5 H(+)(out)</text>
        <dbReference type="Rhea" id="RHEA:57720"/>
        <dbReference type="ChEBI" id="CHEBI:15377"/>
        <dbReference type="ChEBI" id="CHEBI:15378"/>
        <dbReference type="ChEBI" id="CHEBI:30616"/>
        <dbReference type="ChEBI" id="CHEBI:43474"/>
        <dbReference type="ChEBI" id="CHEBI:456216"/>
        <dbReference type="EC" id="7.1.2.2"/>
    </reaction>
</comment>
<comment type="subunit">
    <text evidence="1">F-type ATPases have 2 components, CF(1) - the catalytic core - and CF(0) - the membrane proton channel. CF(1) has five subunits: alpha(3), beta(3), gamma(1), delta(1), epsilon(1). CF(0) has three main subunits: a(1), b(2) and c(9-12). The alpha and beta chains form an alternating ring which encloses part of the gamma chain. CF(1) is attached to CF(0) by a central stalk formed by the gamma and epsilon chains, while a peripheral stalk is formed by the delta and b chains.</text>
</comment>
<comment type="subcellular location">
    <subcellularLocation>
        <location evidence="1">Cell membrane</location>
        <topology evidence="1">Peripheral membrane protein</topology>
    </subcellularLocation>
</comment>
<comment type="similarity">
    <text evidence="1">Belongs to the ATPase alpha/beta chains family.</text>
</comment>
<keyword id="KW-0066">ATP synthesis</keyword>
<keyword id="KW-0067">ATP-binding</keyword>
<keyword id="KW-1003">Cell membrane</keyword>
<keyword id="KW-0139">CF(1)</keyword>
<keyword id="KW-0375">Hydrogen ion transport</keyword>
<keyword id="KW-0406">Ion transport</keyword>
<keyword id="KW-0472">Membrane</keyword>
<keyword id="KW-0547">Nucleotide-binding</keyword>
<keyword id="KW-1185">Reference proteome</keyword>
<keyword id="KW-1278">Translocase</keyword>
<keyword id="KW-0813">Transport</keyword>
<proteinExistence type="inferred from homology"/>
<organism>
    <name type="scientific">Clostridium acetobutylicum (strain ATCC 824 / DSM 792 / JCM 1419 / IAM 19013 / LMG 5710 / NBRC 13948 / NRRL B-527 / VKM B-1787 / 2291 / W)</name>
    <dbReference type="NCBI Taxonomy" id="272562"/>
    <lineage>
        <taxon>Bacteria</taxon>
        <taxon>Bacillati</taxon>
        <taxon>Bacillota</taxon>
        <taxon>Clostridia</taxon>
        <taxon>Eubacteriales</taxon>
        <taxon>Clostridiaceae</taxon>
        <taxon>Clostridium</taxon>
    </lineage>
</organism>
<evidence type="ECO:0000255" key="1">
    <source>
        <dbReference type="HAMAP-Rule" id="MF_01346"/>
    </source>
</evidence>